<organism>
    <name type="scientific">Streptococcus pyogenes serotype M6 (strain ATCC BAA-946 / MGAS10394)</name>
    <dbReference type="NCBI Taxonomy" id="286636"/>
    <lineage>
        <taxon>Bacteria</taxon>
        <taxon>Bacillati</taxon>
        <taxon>Bacillota</taxon>
        <taxon>Bacilli</taxon>
        <taxon>Lactobacillales</taxon>
        <taxon>Streptococcaceae</taxon>
        <taxon>Streptococcus</taxon>
    </lineage>
</organism>
<name>Y533_STRP6</name>
<evidence type="ECO:0000250" key="1"/>
<evidence type="ECO:0000255" key="2"/>
<evidence type="ECO:0000269" key="3">
    <source ref="2"/>
</evidence>
<evidence type="ECO:0000305" key="4"/>
<evidence type="ECO:0000312" key="5">
    <source>
        <dbReference type="EMBL" id="AAT86668.1"/>
    </source>
</evidence>
<feature type="chain" id="PRO_0000259671" description="Putative phosphatase M6_Spy0533">
    <location>
        <begin position="1"/>
        <end position="269"/>
    </location>
</feature>
<feature type="active site" description="Nucleophile" evidence="1">
    <location>
        <position position="9"/>
    </location>
</feature>
<feature type="binding site" evidence="1">
    <location>
        <position position="9"/>
    </location>
    <ligand>
        <name>Mg(2+)</name>
        <dbReference type="ChEBI" id="CHEBI:18420"/>
    </ligand>
</feature>
<feature type="binding site" evidence="1">
    <location>
        <position position="10"/>
    </location>
    <ligand>
        <name>phosphate</name>
        <dbReference type="ChEBI" id="CHEBI:43474"/>
    </ligand>
</feature>
<feature type="binding site" evidence="1">
    <location>
        <position position="11"/>
    </location>
    <ligand>
        <name>Mg(2+)</name>
        <dbReference type="ChEBI" id="CHEBI:18420"/>
    </ligand>
</feature>
<feature type="binding site" evidence="1">
    <location>
        <begin position="43"/>
        <end position="44"/>
    </location>
    <ligand>
        <name>phosphate</name>
        <dbReference type="ChEBI" id="CHEBI:43474"/>
    </ligand>
</feature>
<feature type="binding site" evidence="1">
    <location>
        <position position="196"/>
    </location>
    <ligand>
        <name>phosphate</name>
        <dbReference type="ChEBI" id="CHEBI:43474"/>
    </ligand>
</feature>
<feature type="binding site" evidence="1">
    <location>
        <position position="219"/>
    </location>
    <ligand>
        <name>Mg(2+)</name>
        <dbReference type="ChEBI" id="CHEBI:18420"/>
    </ligand>
</feature>
<feature type="binding site" evidence="1">
    <location>
        <position position="222"/>
    </location>
    <ligand>
        <name>phosphate</name>
        <dbReference type="ChEBI" id="CHEBI:43474"/>
    </ligand>
</feature>
<gene>
    <name type="ordered locus">M6_Spy0533</name>
</gene>
<proteinExistence type="evidence at protein level"/>
<sequence>MSIKLVAVDIDGTLLTDDRRITDDVFQAVQEAKAQGVHVVIATGRPIAGVISLLEQLELNHKGNHVITFNGGLVQDAETGEEIVKELMTYDDYLETEFLSRKLGVHMHAITKEGIYTANRNIGKYTVHESTLVNMPIFYRTPEEMTNKEIIKMMMIDEPDLLDAAIKQIPQHFFDKYTIVKSTPFYLEFMPKTVSKGNAIKHLAKKLGLDMSQTMAIGDAENDRAMLEVVANPVVMENGVPELKKIAKYITKSNNDSGVAHAIRKWVLN</sequence>
<dbReference type="EC" id="3.1.3.-"/>
<dbReference type="EMBL" id="CP000003">
    <property type="protein sequence ID" value="AAT86668.1"/>
    <property type="molecule type" value="Genomic_DNA"/>
</dbReference>
<dbReference type="SMR" id="Q5XD45"/>
<dbReference type="KEGG" id="spa:M6_Spy0533"/>
<dbReference type="HOGENOM" id="CLU_044146_0_1_9"/>
<dbReference type="Proteomes" id="UP000001167">
    <property type="component" value="Chromosome"/>
</dbReference>
<dbReference type="GO" id="GO:0005829">
    <property type="term" value="C:cytosol"/>
    <property type="evidence" value="ECO:0007669"/>
    <property type="project" value="TreeGrafter"/>
</dbReference>
<dbReference type="GO" id="GO:0000287">
    <property type="term" value="F:magnesium ion binding"/>
    <property type="evidence" value="ECO:0007669"/>
    <property type="project" value="TreeGrafter"/>
</dbReference>
<dbReference type="GO" id="GO:0016791">
    <property type="term" value="F:phosphatase activity"/>
    <property type="evidence" value="ECO:0007669"/>
    <property type="project" value="TreeGrafter"/>
</dbReference>
<dbReference type="CDD" id="cd07516">
    <property type="entry name" value="HAD_Pase"/>
    <property type="match status" value="1"/>
</dbReference>
<dbReference type="Gene3D" id="3.30.1240.10">
    <property type="match status" value="1"/>
</dbReference>
<dbReference type="Gene3D" id="3.40.50.1000">
    <property type="entry name" value="HAD superfamily/HAD-like"/>
    <property type="match status" value="1"/>
</dbReference>
<dbReference type="InterPro" id="IPR000150">
    <property type="entry name" value="Cof"/>
</dbReference>
<dbReference type="InterPro" id="IPR036412">
    <property type="entry name" value="HAD-like_sf"/>
</dbReference>
<dbReference type="InterPro" id="IPR006379">
    <property type="entry name" value="HAD-SF_hydro_IIB"/>
</dbReference>
<dbReference type="InterPro" id="IPR023214">
    <property type="entry name" value="HAD_sf"/>
</dbReference>
<dbReference type="NCBIfam" id="TIGR00099">
    <property type="entry name" value="Cof-subfamily"/>
    <property type="match status" value="1"/>
</dbReference>
<dbReference type="NCBIfam" id="TIGR01484">
    <property type="entry name" value="HAD-SF-IIB"/>
    <property type="match status" value="1"/>
</dbReference>
<dbReference type="NCBIfam" id="NF007806">
    <property type="entry name" value="PRK10513.1"/>
    <property type="match status" value="1"/>
</dbReference>
<dbReference type="PANTHER" id="PTHR10000:SF8">
    <property type="entry name" value="HAD SUPERFAMILY HYDROLASE-LIKE, TYPE 3"/>
    <property type="match status" value="1"/>
</dbReference>
<dbReference type="PANTHER" id="PTHR10000">
    <property type="entry name" value="PHOSPHOSERINE PHOSPHATASE"/>
    <property type="match status" value="1"/>
</dbReference>
<dbReference type="Pfam" id="PF08282">
    <property type="entry name" value="Hydrolase_3"/>
    <property type="match status" value="1"/>
</dbReference>
<dbReference type="SFLD" id="SFLDG01144">
    <property type="entry name" value="C2.B.4:_PGP_Like"/>
    <property type="match status" value="1"/>
</dbReference>
<dbReference type="SFLD" id="SFLDS00003">
    <property type="entry name" value="Haloacid_Dehalogenase"/>
    <property type="match status" value="1"/>
</dbReference>
<dbReference type="SUPFAM" id="SSF56784">
    <property type="entry name" value="HAD-like"/>
    <property type="match status" value="1"/>
</dbReference>
<dbReference type="PROSITE" id="PS01228">
    <property type="entry name" value="COF_1"/>
    <property type="match status" value="1"/>
</dbReference>
<dbReference type="PROSITE" id="PS01229">
    <property type="entry name" value="COF_2"/>
    <property type="match status" value="1"/>
</dbReference>
<keyword id="KW-0903">Direct protein sequencing</keyword>
<keyword id="KW-0378">Hydrolase</keyword>
<keyword id="KW-0460">Magnesium</keyword>
<keyword id="KW-0479">Metal-binding</keyword>
<comment type="cofactor">
    <cofactor evidence="1">
        <name>Mg(2+)</name>
        <dbReference type="ChEBI" id="CHEBI:18420"/>
    </cofactor>
</comment>
<comment type="mass spectrometry"/>
<comment type="similarity">
    <text evidence="2">Belongs to the HAD-like hydrolase superfamily. Cof family.</text>
</comment>
<accession>Q5XD45</accession>
<accession>P82560</accession>
<reference evidence="5" key="1">
    <citation type="journal article" date="2004" name="J. Infect. Dis.">
        <title>Progress toward characterization of the group A Streptococcus metagenome: complete genome sequence of a macrolide-resistant serotype M6 strain.</title>
        <authorList>
            <person name="Banks D.J."/>
            <person name="Porcella S.F."/>
            <person name="Barbian K.D."/>
            <person name="Beres S.B."/>
            <person name="Philips L.E."/>
            <person name="Voyich J.M."/>
            <person name="DeLeo F.R."/>
            <person name="Martin J.M."/>
            <person name="Somerville G.A."/>
            <person name="Musser J.M."/>
        </authorList>
    </citation>
    <scope>NUCLEOTIDE SEQUENCE [LARGE SCALE GENOMIC DNA]</scope>
    <source>
        <strain>ATCC BAA-946 / MGAS10394</strain>
    </source>
</reference>
<reference evidence="4" key="2">
    <citation type="submission" date="2000-05" db="UniProtKB">
        <title>Two-dimensional gel electrophoresis map of Streptococcus pyogenes proteins.</title>
        <authorList>
            <person name="Hogan D.A."/>
            <person name="Du P."/>
            <person name="Stevenson T.I."/>
            <person name="Whitton M."/>
            <person name="Kilby G.W."/>
            <person name="Rogers J."/>
            <person name="VanBogelen R.A."/>
        </authorList>
    </citation>
    <scope>PROTEIN SEQUENCE OF 21-33</scope>
    <scope>MASS SPECTROMETRY</scope>
    <source>
        <strain evidence="3">JRS4 / Serotype M6</strain>
    </source>
</reference>
<protein>
    <recommendedName>
        <fullName>Putative phosphatase M6_Spy0533</fullName>
        <ecNumber>3.1.3.-</ecNumber>
    </recommendedName>
</protein>